<name>VIRC2_AGRFC</name>
<feature type="chain" id="PRO_0000065853" description="Protein virC2">
    <location>
        <begin position="1"/>
        <end position="202"/>
    </location>
</feature>
<feature type="region of interest" description="Disordered" evidence="1">
    <location>
        <begin position="21"/>
        <end position="66"/>
    </location>
</feature>
<feature type="strand" evidence="2">
    <location>
        <begin position="83"/>
        <end position="88"/>
    </location>
</feature>
<feature type="helix" evidence="2">
    <location>
        <begin position="97"/>
        <end position="102"/>
    </location>
</feature>
<feature type="turn" evidence="2">
    <location>
        <begin position="103"/>
        <end position="105"/>
    </location>
</feature>
<feature type="helix" evidence="2">
    <location>
        <begin position="108"/>
        <end position="128"/>
    </location>
</feature>
<feature type="helix" evidence="2">
    <location>
        <begin position="131"/>
        <end position="134"/>
    </location>
</feature>
<feature type="strand" evidence="2">
    <location>
        <begin position="152"/>
        <end position="157"/>
    </location>
</feature>
<feature type="helix" evidence="2">
    <location>
        <begin position="160"/>
        <end position="170"/>
    </location>
</feature>
<feature type="helix" evidence="2">
    <location>
        <begin position="178"/>
        <end position="199"/>
    </location>
</feature>
<geneLocation type="plasmid">
    <name>pTiC58</name>
</geneLocation>
<evidence type="ECO:0000256" key="1">
    <source>
        <dbReference type="SAM" id="MobiDB-lite"/>
    </source>
</evidence>
<evidence type="ECO:0007829" key="2">
    <source>
        <dbReference type="PDB" id="2RH3"/>
    </source>
</evidence>
<accession>P07166</accession>
<reference key="1">
    <citation type="journal article" date="1987" name="J. Bacteriol.">
        <title>Molecular characterization of the virC genes of the Ti plasmid.</title>
        <authorList>
            <person name="Close T.J."/>
            <person name="Tait R.C."/>
            <person name="Rempel H.C."/>
            <person name="Hirooka T."/>
            <person name="Kim L."/>
            <person name="Kado C.I."/>
        </authorList>
    </citation>
    <scope>NUCLEOTIDE SEQUENCE [GENOMIC DNA]</scope>
</reference>
<reference key="2">
    <citation type="journal article" date="1990" name="Plasmid">
        <title>Molecular characterization of the vir regulon of Agrobacterium tumefaciens: complete nucleotide sequence and gene organization of the 28.63-kbp regulon cloned as a single unit.</title>
        <authorList>
            <person name="Rogowsky P.M."/>
            <person name="Powell B.S."/>
            <person name="Shirasu K."/>
            <person name="Lin T.-S."/>
            <person name="Morel P."/>
            <person name="Zyprian E.M."/>
            <person name="Steck T.R."/>
            <person name="Kado C.I."/>
        </authorList>
    </citation>
    <scope>NUCLEOTIDE SEQUENCE [GENOMIC DNA]</scope>
</reference>
<reference key="3">
    <citation type="journal article" date="2001" name="Science">
        <title>The genome of the natural genetic engineer Agrobacterium tumefaciens C58.</title>
        <authorList>
            <person name="Wood D.W."/>
            <person name="Setubal J.C."/>
            <person name="Kaul R."/>
            <person name="Monks D.E."/>
            <person name="Kitajima J.P."/>
            <person name="Okura V.K."/>
            <person name="Zhou Y."/>
            <person name="Chen L."/>
            <person name="Wood G.E."/>
            <person name="Almeida N.F. Jr."/>
            <person name="Woo L."/>
            <person name="Chen Y."/>
            <person name="Paulsen I.T."/>
            <person name="Eisen J.A."/>
            <person name="Karp P.D."/>
            <person name="Bovee D. Sr."/>
            <person name="Chapman P."/>
            <person name="Clendenning J."/>
            <person name="Deatherage G."/>
            <person name="Gillet W."/>
            <person name="Grant C."/>
            <person name="Kutyavin T."/>
            <person name="Levy R."/>
            <person name="Li M.-J."/>
            <person name="McClelland E."/>
            <person name="Palmieri A."/>
            <person name="Raymond C."/>
            <person name="Rouse G."/>
            <person name="Saenphimmachak C."/>
            <person name="Wu Z."/>
            <person name="Romero P."/>
            <person name="Gordon D."/>
            <person name="Zhang S."/>
            <person name="Yoo H."/>
            <person name="Tao Y."/>
            <person name="Biddle P."/>
            <person name="Jung M."/>
            <person name="Krespan W."/>
            <person name="Perry M."/>
            <person name="Gordon-Kamm B."/>
            <person name="Liao L."/>
            <person name="Kim S."/>
            <person name="Hendrick C."/>
            <person name="Zhao Z.-Y."/>
            <person name="Dolan M."/>
            <person name="Chumley F."/>
            <person name="Tingey S.V."/>
            <person name="Tomb J.-F."/>
            <person name="Gordon M.P."/>
            <person name="Olson M.V."/>
            <person name="Nester E.W."/>
        </authorList>
    </citation>
    <scope>NUCLEOTIDE SEQUENCE [LARGE SCALE GENOMIC DNA]</scope>
</reference>
<reference key="4">
    <citation type="journal article" date="2001" name="Science">
        <title>Genome sequence of the plant pathogen and biotechnology agent Agrobacterium tumefaciens C58.</title>
        <authorList>
            <person name="Goodner B."/>
            <person name="Hinkle G."/>
            <person name="Gattung S."/>
            <person name="Miller N."/>
            <person name="Blanchard M."/>
            <person name="Qurollo B."/>
            <person name="Goldman B.S."/>
            <person name="Cao Y."/>
            <person name="Askenazi M."/>
            <person name="Halling C."/>
            <person name="Mullin L."/>
            <person name="Houmiel K."/>
            <person name="Gordon J."/>
            <person name="Vaudin M."/>
            <person name="Iartchouk O."/>
            <person name="Epp A."/>
            <person name="Liu F."/>
            <person name="Wollam C."/>
            <person name="Allinger M."/>
            <person name="Doughty D."/>
            <person name="Scott C."/>
            <person name="Lappas C."/>
            <person name="Markelz B."/>
            <person name="Flanagan C."/>
            <person name="Crowell C."/>
            <person name="Gurson J."/>
            <person name="Lomo C."/>
            <person name="Sear C."/>
            <person name="Strub G."/>
            <person name="Cielo C."/>
            <person name="Slater S."/>
        </authorList>
    </citation>
    <scope>NUCLEOTIDE SEQUENCE [LARGE SCALE GENOMIC DNA]</scope>
    <source>
        <strain>C58 / ATCC 33970</strain>
    </source>
</reference>
<sequence>MGIRKPALSVGEARRLAAARPEIVHPSLPVATQNSTLPQPPENLDEEDRRPAPATAKRCHSSDQQSMLTVDALSSTTAPEKIQVFLSARPPAPEVSKIYDNLILQYSPSKSLQMILRRALGDFENMLADGSFRAAPKSYPIPHTAFEKSIIVQTSRMFPVSLIEAARNHFDPLGLETARAFGHKLATAALACFFAREKATNS</sequence>
<dbReference type="EMBL" id="Y00535">
    <property type="protein sequence ID" value="CAA68596.1"/>
    <property type="molecule type" value="Genomic_DNA"/>
</dbReference>
<dbReference type="EMBL" id="M16397">
    <property type="protein sequence ID" value="AAA98387.1"/>
    <property type="molecule type" value="Genomic_DNA"/>
</dbReference>
<dbReference type="EMBL" id="J03320">
    <property type="status" value="NOT_ANNOTATED_CDS"/>
    <property type="molecule type" value="Genomic_DNA"/>
</dbReference>
<dbReference type="EMBL" id="AE007871">
    <property type="protein sequence ID" value="AAK90941.2"/>
    <property type="molecule type" value="Genomic_DNA"/>
</dbReference>
<dbReference type="PIR" id="AI3249">
    <property type="entry name" value="AI3249"/>
</dbReference>
<dbReference type="PIR" id="B25975">
    <property type="entry name" value="B25975"/>
</dbReference>
<dbReference type="RefSeq" id="NP_396500.2">
    <property type="nucleotide sequence ID" value="NC_003065.3"/>
</dbReference>
<dbReference type="RefSeq" id="WP_010891491.1">
    <property type="nucleotide sequence ID" value="NZ_KY000036.1"/>
</dbReference>
<dbReference type="PDB" id="2RH3">
    <property type="method" value="X-ray"/>
    <property type="resolution" value="1.70 A"/>
    <property type="chains" value="A=82-202"/>
</dbReference>
<dbReference type="PDBsum" id="2RH3"/>
<dbReference type="SMR" id="P07166"/>
<dbReference type="IntAct" id="P07166">
    <property type="interactions" value="2"/>
</dbReference>
<dbReference type="MINT" id="P07166"/>
<dbReference type="EnsemblBacteria" id="AAK90941">
    <property type="protein sequence ID" value="AAK90941"/>
    <property type="gene ID" value="Atu6179"/>
</dbReference>
<dbReference type="KEGG" id="atu:Atu6179"/>
<dbReference type="PATRIC" id="fig|176299.10.peg.5373"/>
<dbReference type="HOGENOM" id="CLU_1352254_0_0_5"/>
<dbReference type="OrthoDB" id="8373325at2"/>
<dbReference type="BioCyc" id="AGRO:ATU6179-MONOMER"/>
<dbReference type="EvolutionaryTrace" id="P07166"/>
<dbReference type="Proteomes" id="UP000000813">
    <property type="component" value="Plasmid Ti"/>
</dbReference>
<dbReference type="GO" id="GO:0003677">
    <property type="term" value="F:DNA binding"/>
    <property type="evidence" value="ECO:0000317"/>
    <property type="project" value="PAMGO_GAT"/>
</dbReference>
<dbReference type="GO" id="GO:0006355">
    <property type="term" value="P:regulation of DNA-templated transcription"/>
    <property type="evidence" value="ECO:0007669"/>
    <property type="project" value="InterPro"/>
</dbReference>
<dbReference type="Gene3D" id="1.10.1220.190">
    <property type="entry name" value="VirC2, RHH domain"/>
    <property type="match status" value="1"/>
</dbReference>
<dbReference type="InterPro" id="IPR010985">
    <property type="entry name" value="Ribbon_hlx_hlx"/>
</dbReference>
<dbReference type="InterPro" id="IPR009841">
    <property type="entry name" value="VirC2"/>
</dbReference>
<dbReference type="InterPro" id="IPR038473">
    <property type="entry name" value="VirC2_C_sf"/>
</dbReference>
<dbReference type="NCBIfam" id="NF010436">
    <property type="entry name" value="PRK13862.1"/>
    <property type="match status" value="1"/>
</dbReference>
<dbReference type="Pfam" id="PF07181">
    <property type="entry name" value="VirC2"/>
    <property type="match status" value="1"/>
</dbReference>
<dbReference type="PIRSF" id="PIRSF016094">
    <property type="entry name" value="VirC2"/>
    <property type="match status" value="1"/>
</dbReference>
<dbReference type="SUPFAM" id="SSF47598">
    <property type="entry name" value="Ribbon-helix-helix"/>
    <property type="match status" value="1"/>
</dbReference>
<keyword id="KW-0002">3D-structure</keyword>
<keyword id="KW-0192">Crown gall tumor</keyword>
<keyword id="KW-0614">Plasmid</keyword>
<keyword id="KW-1185">Reference proteome</keyword>
<comment type="interaction">
    <interactant intactId="EBI-7412655">
        <id>P07166</id>
    </interactant>
    <interactant intactId="EBI-7412683">
        <id>P07165</id>
        <label>virC1</label>
    </interactant>
    <organismsDiffer>false</organismsDiffer>
    <experiments>3</experiments>
</comment>
<comment type="miscellaneous">
    <text>The Ti plasmid contains at least six transcriptional units, designated vir loci, which are essential for efficient crown-gall tumorigenesis.</text>
</comment>
<gene>
    <name type="primary">virC2</name>
    <name type="ordered locus">Atu6179</name>
    <name type="ORF">AGR_pTi_16</name>
</gene>
<proteinExistence type="evidence at protein level"/>
<protein>
    <recommendedName>
        <fullName>Protein virC2</fullName>
    </recommendedName>
</protein>
<organism>
    <name type="scientific">Agrobacterium fabrum (strain C58 / ATCC 33970)</name>
    <name type="common">Agrobacterium tumefaciens (strain C58)</name>
    <dbReference type="NCBI Taxonomy" id="176299"/>
    <lineage>
        <taxon>Bacteria</taxon>
        <taxon>Pseudomonadati</taxon>
        <taxon>Pseudomonadota</taxon>
        <taxon>Alphaproteobacteria</taxon>
        <taxon>Hyphomicrobiales</taxon>
        <taxon>Rhizobiaceae</taxon>
        <taxon>Rhizobium/Agrobacterium group</taxon>
        <taxon>Agrobacterium</taxon>
        <taxon>Agrobacterium tumefaciens complex</taxon>
    </lineage>
</organism>